<gene>
    <name type="ORF">SPBPB2B2.16c</name>
</gene>
<evidence type="ECO:0000255" key="1"/>
<evidence type="ECO:0000269" key="2">
    <source>
    </source>
</evidence>
<evidence type="ECO:0000305" key="3"/>
<dbReference type="EMBL" id="CU329671">
    <property type="protein sequence ID" value="CAC21418.1"/>
    <property type="molecule type" value="Genomic_DNA"/>
</dbReference>
<dbReference type="RefSeq" id="NP_595028.1">
    <property type="nucleotide sequence ID" value="NM_001020458.2"/>
</dbReference>
<dbReference type="RefSeq" id="NP_596862.1">
    <property type="nucleotide sequence ID" value="NM_001023885.1"/>
</dbReference>
<dbReference type="SMR" id="P0CU11"/>
<dbReference type="FunCoup" id="P0CU11">
    <property type="interactions" value="7"/>
</dbReference>
<dbReference type="PaxDb" id="4896-SPAC750.02c.1"/>
<dbReference type="EnsemblFungi" id="SPAC750.02c.1">
    <property type="protein sequence ID" value="SPAC750.02c.1:pep"/>
    <property type="gene ID" value="SPAC750.02c"/>
</dbReference>
<dbReference type="EnsemblFungi" id="SPBPB2B2.16c.1">
    <property type="protein sequence ID" value="SPBPB2B2.16c.1:pep"/>
    <property type="gene ID" value="SPBPB2B2.16c"/>
</dbReference>
<dbReference type="KEGG" id="spo:2541400"/>
<dbReference type="KEGG" id="spo:2541534"/>
<dbReference type="PomBase" id="SPBPB2B2.16c"/>
<dbReference type="VEuPathDB" id="FungiDB:SPAC750.02c"/>
<dbReference type="VEuPathDB" id="FungiDB:SPBPB2B2.16c"/>
<dbReference type="eggNOG" id="KOG0255">
    <property type="taxonomic scope" value="Eukaryota"/>
</dbReference>
<dbReference type="InParanoid" id="P0CU11"/>
<dbReference type="OMA" id="YHASTTI"/>
<dbReference type="PhylomeDB" id="P0CU11"/>
<dbReference type="PRO" id="PR:P0CU11"/>
<dbReference type="Proteomes" id="UP000002485">
    <property type="component" value="Chromosome II"/>
</dbReference>
<dbReference type="GO" id="GO:0005794">
    <property type="term" value="C:Golgi apparatus"/>
    <property type="evidence" value="ECO:0007669"/>
    <property type="project" value="UniProtKB-SubCell"/>
</dbReference>
<dbReference type="GO" id="GO:0016020">
    <property type="term" value="C:membrane"/>
    <property type="evidence" value="ECO:0007669"/>
    <property type="project" value="UniProtKB-SubCell"/>
</dbReference>
<dbReference type="GO" id="GO:0022857">
    <property type="term" value="F:transmembrane transporter activity"/>
    <property type="evidence" value="ECO:0000318"/>
    <property type="project" value="GO_Central"/>
</dbReference>
<dbReference type="GO" id="GO:0055085">
    <property type="term" value="P:transmembrane transport"/>
    <property type="evidence" value="ECO:0000318"/>
    <property type="project" value="GO_Central"/>
</dbReference>
<dbReference type="CDD" id="cd17323">
    <property type="entry name" value="MFS_Tpo1_MDR_like"/>
    <property type="match status" value="1"/>
</dbReference>
<dbReference type="FunFam" id="1.20.1250.20:FF:000509">
    <property type="entry name" value="MFS general substrate transporter"/>
    <property type="match status" value="1"/>
</dbReference>
<dbReference type="Gene3D" id="1.20.1250.20">
    <property type="entry name" value="MFS general substrate transporter like domains"/>
    <property type="match status" value="1"/>
</dbReference>
<dbReference type="InterPro" id="IPR011701">
    <property type="entry name" value="MFS"/>
</dbReference>
<dbReference type="InterPro" id="IPR020846">
    <property type="entry name" value="MFS_dom"/>
</dbReference>
<dbReference type="InterPro" id="IPR036259">
    <property type="entry name" value="MFS_trans_sf"/>
</dbReference>
<dbReference type="PANTHER" id="PTHR23502">
    <property type="entry name" value="MAJOR FACILITATOR SUPERFAMILY"/>
    <property type="match status" value="1"/>
</dbReference>
<dbReference type="PANTHER" id="PTHR23502:SF189">
    <property type="entry name" value="MEMBRANE TRANSPORTER"/>
    <property type="match status" value="1"/>
</dbReference>
<dbReference type="Pfam" id="PF07690">
    <property type="entry name" value="MFS_1"/>
    <property type="match status" value="1"/>
</dbReference>
<dbReference type="SUPFAM" id="SSF103473">
    <property type="entry name" value="MFS general substrate transporter"/>
    <property type="match status" value="1"/>
</dbReference>
<dbReference type="PROSITE" id="PS50850">
    <property type="entry name" value="MFS"/>
    <property type="match status" value="1"/>
</dbReference>
<accession>P0CU11</accession>
<accession>Q9P3E8</accession>
<name>YHEG_SCHPO</name>
<comment type="subcellular location">
    <subcellularLocation>
        <location evidence="2">Golgi apparatus</location>
    </subcellularLocation>
    <subcellularLocation>
        <location evidence="1">Membrane</location>
        <topology evidence="1">Multi-pass membrane protein</topology>
    </subcellularLocation>
</comment>
<comment type="similarity">
    <text evidence="3">Belongs to the major facilitator superfamily. CAR1 family.</text>
</comment>
<reference key="1">
    <citation type="journal article" date="2002" name="Nature">
        <title>The genome sequence of Schizosaccharomyces pombe.</title>
        <authorList>
            <person name="Wood V."/>
            <person name="Gwilliam R."/>
            <person name="Rajandream M.A."/>
            <person name="Lyne M.H."/>
            <person name="Lyne R."/>
            <person name="Stewart A."/>
            <person name="Sgouros J.G."/>
            <person name="Peat N."/>
            <person name="Hayles J."/>
            <person name="Baker S.G."/>
            <person name="Basham D."/>
            <person name="Bowman S."/>
            <person name="Brooks K."/>
            <person name="Brown D."/>
            <person name="Brown S."/>
            <person name="Chillingworth T."/>
            <person name="Churcher C.M."/>
            <person name="Collins M."/>
            <person name="Connor R."/>
            <person name="Cronin A."/>
            <person name="Davis P."/>
            <person name="Feltwell T."/>
            <person name="Fraser A."/>
            <person name="Gentles S."/>
            <person name="Goble A."/>
            <person name="Hamlin N."/>
            <person name="Harris D.E."/>
            <person name="Hidalgo J."/>
            <person name="Hodgson G."/>
            <person name="Holroyd S."/>
            <person name="Hornsby T."/>
            <person name="Howarth S."/>
            <person name="Huckle E.J."/>
            <person name="Hunt S."/>
            <person name="Jagels K."/>
            <person name="James K.D."/>
            <person name="Jones L."/>
            <person name="Jones M."/>
            <person name="Leather S."/>
            <person name="McDonald S."/>
            <person name="McLean J."/>
            <person name="Mooney P."/>
            <person name="Moule S."/>
            <person name="Mungall K.L."/>
            <person name="Murphy L.D."/>
            <person name="Niblett D."/>
            <person name="Odell C."/>
            <person name="Oliver K."/>
            <person name="O'Neil S."/>
            <person name="Pearson D."/>
            <person name="Quail M.A."/>
            <person name="Rabbinowitsch E."/>
            <person name="Rutherford K.M."/>
            <person name="Rutter S."/>
            <person name="Saunders D."/>
            <person name="Seeger K."/>
            <person name="Sharp S."/>
            <person name="Skelton J."/>
            <person name="Simmonds M.N."/>
            <person name="Squares R."/>
            <person name="Squares S."/>
            <person name="Stevens K."/>
            <person name="Taylor K."/>
            <person name="Taylor R.G."/>
            <person name="Tivey A."/>
            <person name="Walsh S.V."/>
            <person name="Warren T."/>
            <person name="Whitehead S."/>
            <person name="Woodward J.R."/>
            <person name="Volckaert G."/>
            <person name="Aert R."/>
            <person name="Robben J."/>
            <person name="Grymonprez B."/>
            <person name="Weltjens I."/>
            <person name="Vanstreels E."/>
            <person name="Rieger M."/>
            <person name="Schaefer M."/>
            <person name="Mueller-Auer S."/>
            <person name="Gabel C."/>
            <person name="Fuchs M."/>
            <person name="Duesterhoeft A."/>
            <person name="Fritzc C."/>
            <person name="Holzer E."/>
            <person name="Moestl D."/>
            <person name="Hilbert H."/>
            <person name="Borzym K."/>
            <person name="Langer I."/>
            <person name="Beck A."/>
            <person name="Lehrach H."/>
            <person name="Reinhardt R."/>
            <person name="Pohl T.M."/>
            <person name="Eger P."/>
            <person name="Zimmermann W."/>
            <person name="Wedler H."/>
            <person name="Wambutt R."/>
            <person name="Purnelle B."/>
            <person name="Goffeau A."/>
            <person name="Cadieu E."/>
            <person name="Dreano S."/>
            <person name="Gloux S."/>
            <person name="Lelaure V."/>
            <person name="Mottier S."/>
            <person name="Galibert F."/>
            <person name="Aves S.J."/>
            <person name="Xiang Z."/>
            <person name="Hunt C."/>
            <person name="Moore K."/>
            <person name="Hurst S.M."/>
            <person name="Lucas M."/>
            <person name="Rochet M."/>
            <person name="Gaillardin C."/>
            <person name="Tallada V.A."/>
            <person name="Garzon A."/>
            <person name="Thode G."/>
            <person name="Daga R.R."/>
            <person name="Cruzado L."/>
            <person name="Jimenez J."/>
            <person name="Sanchez M."/>
            <person name="del Rey F."/>
            <person name="Benito J."/>
            <person name="Dominguez A."/>
            <person name="Revuelta J.L."/>
            <person name="Moreno S."/>
            <person name="Armstrong J."/>
            <person name="Forsburg S.L."/>
            <person name="Cerutti L."/>
            <person name="Lowe T."/>
            <person name="McCombie W.R."/>
            <person name="Paulsen I."/>
            <person name="Potashkin J."/>
            <person name="Shpakovski G.V."/>
            <person name="Ussery D."/>
            <person name="Barrell B.G."/>
            <person name="Nurse P."/>
        </authorList>
    </citation>
    <scope>NUCLEOTIDE SEQUENCE [LARGE SCALE GENOMIC DNA]</scope>
    <source>
        <strain>972 / ATCC 24843</strain>
    </source>
</reference>
<reference key="2">
    <citation type="journal article" date="2006" name="Nat. Biotechnol.">
        <title>ORFeome cloning and global analysis of protein localization in the fission yeast Schizosaccharomyces pombe.</title>
        <authorList>
            <person name="Matsuyama A."/>
            <person name="Arai R."/>
            <person name="Yashiroda Y."/>
            <person name="Shirai A."/>
            <person name="Kamata A."/>
            <person name="Sekido S."/>
            <person name="Kobayashi Y."/>
            <person name="Hashimoto A."/>
            <person name="Hamamoto M."/>
            <person name="Hiraoka Y."/>
            <person name="Horinouchi S."/>
            <person name="Yoshida M."/>
        </authorList>
    </citation>
    <scope>SUBCELLULAR LOCATION [LARGE SCALE ANALYSIS]</scope>
</reference>
<keyword id="KW-0333">Golgi apparatus</keyword>
<keyword id="KW-0472">Membrane</keyword>
<keyword id="KW-1185">Reference proteome</keyword>
<keyword id="KW-0812">Transmembrane</keyword>
<keyword id="KW-1133">Transmembrane helix</keyword>
<keyword id="KW-0813">Transport</keyword>
<sequence length="485" mass="54087">MKEESILKKCDSSSIKHVPSTPLETNCPDKYNPKTWPIRLKVRNVIVISSMTFLNQYGDSVFAPSISNIAEQFHASRTLVTLGATLYTLGILFGNLIFAPLSEQFGRRPIYLIGYSVFALLQIPIALSVNLAMFLVFRFFSGLFGSVGLSNGSGSLADLFEKKDRGKYMVIYFTVLSIGPGIAPIISGFISQSSIGWQWEFWILLILSGFNLFWAFLLLKETYPPVLNRKKFEKYGEIGENEPVALRLTGKQLLIKLLILLSMKKPISILLSQPILICVACTIGSIYGMINLVLIAFSEVWKSSYDFSPGISGLMYISITLGLFSAVFIAMPINQKFYSYLVKRNGGEGEPEFRLPMGFIGITLFEIGILLFGWTARYKIFWFVPTIGSAIMGGGYIMTSNPLNMYVVDSYGIYSASASAGVKIFQLLLGAIFPLFAESLFRRLNYGWGCTLLAFILLACGCSLPILFKYGKQIRNLRPFDPSKY</sequence>
<organism>
    <name type="scientific">Schizosaccharomyces pombe (strain 972 / ATCC 24843)</name>
    <name type="common">Fission yeast</name>
    <dbReference type="NCBI Taxonomy" id="284812"/>
    <lineage>
        <taxon>Eukaryota</taxon>
        <taxon>Fungi</taxon>
        <taxon>Dikarya</taxon>
        <taxon>Ascomycota</taxon>
        <taxon>Taphrinomycotina</taxon>
        <taxon>Schizosaccharomycetes</taxon>
        <taxon>Schizosaccharomycetales</taxon>
        <taxon>Schizosaccharomycetaceae</taxon>
        <taxon>Schizosaccharomyces</taxon>
    </lineage>
</organism>
<protein>
    <recommendedName>
        <fullName>Uncharacterized transporter SPBPB2B2.16c</fullName>
    </recommendedName>
</protein>
<proteinExistence type="inferred from homology"/>
<feature type="chain" id="PRO_0000437232" description="Uncharacterized transporter SPBPB2B2.16c">
    <location>
        <begin position="1"/>
        <end position="485"/>
    </location>
</feature>
<feature type="transmembrane region" description="Helical" evidence="1">
    <location>
        <begin position="79"/>
        <end position="99"/>
    </location>
</feature>
<feature type="transmembrane region" description="Helical" evidence="1">
    <location>
        <begin position="117"/>
        <end position="137"/>
    </location>
</feature>
<feature type="transmembrane region" description="Helical" evidence="1">
    <location>
        <begin position="139"/>
        <end position="159"/>
    </location>
</feature>
<feature type="transmembrane region" description="Helical" evidence="1">
    <location>
        <begin position="170"/>
        <end position="190"/>
    </location>
</feature>
<feature type="transmembrane region" description="Helical" evidence="1">
    <location>
        <begin position="199"/>
        <end position="219"/>
    </location>
</feature>
<feature type="transmembrane region" description="Helical" evidence="1">
    <location>
        <begin position="275"/>
        <end position="295"/>
    </location>
</feature>
<feature type="transmembrane region" description="Helical" evidence="1">
    <location>
        <begin position="313"/>
        <end position="333"/>
    </location>
</feature>
<feature type="transmembrane region" description="Helical" evidence="1">
    <location>
        <begin position="355"/>
        <end position="375"/>
    </location>
</feature>
<feature type="transmembrane region" description="Helical" evidence="1">
    <location>
        <begin position="380"/>
        <end position="400"/>
    </location>
</feature>
<feature type="transmembrane region" description="Helical" evidence="1">
    <location>
        <begin position="421"/>
        <end position="441"/>
    </location>
</feature>
<feature type="transmembrane region" description="Helical" evidence="1">
    <location>
        <begin position="448"/>
        <end position="468"/>
    </location>
</feature>